<name>YBL1_STRCI</name>
<sequence>MVATAEGEPGLTDALARLAGSGRADMPDLELLPGSYDLPGARLLDVVEVMDRIRLACPWSARRTHHDLVKYGVEEMYELVDAIEAGDRGELREELGDVLLQVVFHARIAQDDADEPFAIDDVAGTLVTKLVHRHPHVFGDDVAETAADVEAHWRRRKAEEKHERTSVTEGVPLGQPALALAAKLASRARAAGIAVRPEECGTGVGYRLLEMAVGAEADGVDPESALRAAAHVYRDAIRAAEG</sequence>
<reference key="1">
    <citation type="journal article" date="1992" name="J. Bacteriol.">
        <title>Nucleotide sequence and transcriptional analysis of activator-regulator proteins for beta-lactamase in Streptomyces cacaoi.</title>
        <authorList>
            <person name="Urabe H."/>
            <person name="Ogawara H."/>
        </authorList>
    </citation>
    <scope>NUCLEOTIDE SEQUENCE [GENOMIC DNA]</scope>
    <source>
        <strain>ATCC 3082 / DSM 40057 / JCM 4352 / BCRC 12103 / KCC S-0352 / LMG 19320 / NBRC 12748 / NCIMB 9626 / IMRU 3082</strain>
    </source>
</reference>
<protein>
    <recommendedName>
        <fullName>Uncharacterized 26.1 kDa protein in blaB 3'region</fullName>
    </recommendedName>
</protein>
<accession>P33653</accession>
<dbReference type="EMBL" id="D00937">
    <property type="protein sequence ID" value="BAA00775.1"/>
    <property type="molecule type" value="Genomic_DNA"/>
</dbReference>
<dbReference type="SMR" id="P33653"/>
<dbReference type="GO" id="GO:0047429">
    <property type="term" value="F:nucleoside triphosphate diphosphatase activity"/>
    <property type="evidence" value="ECO:0007669"/>
    <property type="project" value="TreeGrafter"/>
</dbReference>
<dbReference type="GO" id="GO:0046061">
    <property type="term" value="P:dATP catabolic process"/>
    <property type="evidence" value="ECO:0007669"/>
    <property type="project" value="TreeGrafter"/>
</dbReference>
<dbReference type="GO" id="GO:0006203">
    <property type="term" value="P:dGTP catabolic process"/>
    <property type="evidence" value="ECO:0007669"/>
    <property type="project" value="TreeGrafter"/>
</dbReference>
<dbReference type="GO" id="GO:0046076">
    <property type="term" value="P:dTTP catabolic process"/>
    <property type="evidence" value="ECO:0007669"/>
    <property type="project" value="TreeGrafter"/>
</dbReference>
<dbReference type="GO" id="GO:0046081">
    <property type="term" value="P:dUTP catabolic process"/>
    <property type="evidence" value="ECO:0007669"/>
    <property type="project" value="TreeGrafter"/>
</dbReference>
<dbReference type="GO" id="GO:0046047">
    <property type="term" value="P:TTP catabolic process"/>
    <property type="evidence" value="ECO:0007669"/>
    <property type="project" value="TreeGrafter"/>
</dbReference>
<dbReference type="GO" id="GO:0046052">
    <property type="term" value="P:UTP catabolic process"/>
    <property type="evidence" value="ECO:0007669"/>
    <property type="project" value="TreeGrafter"/>
</dbReference>
<dbReference type="CDD" id="cd11528">
    <property type="entry name" value="NTP-PPase_MazG_Nterm"/>
    <property type="match status" value="1"/>
</dbReference>
<dbReference type="FunFam" id="1.10.287.1080:FF:000001">
    <property type="entry name" value="Nucleoside triphosphate pyrophosphohydrolase"/>
    <property type="match status" value="1"/>
</dbReference>
<dbReference type="Gene3D" id="1.10.287.1080">
    <property type="entry name" value="MazG-like"/>
    <property type="match status" value="1"/>
</dbReference>
<dbReference type="InterPro" id="IPR004518">
    <property type="entry name" value="MazG-like_dom"/>
</dbReference>
<dbReference type="InterPro" id="IPR048015">
    <property type="entry name" value="NTP-PPase_MazG-like_N"/>
</dbReference>
<dbReference type="InterPro" id="IPR011551">
    <property type="entry name" value="NTP_PyrPHydrolase_MazG"/>
</dbReference>
<dbReference type="PANTHER" id="PTHR30522">
    <property type="entry name" value="NUCLEOSIDE TRIPHOSPHATE PYROPHOSPHOHYDROLASE"/>
    <property type="match status" value="1"/>
</dbReference>
<dbReference type="PANTHER" id="PTHR30522:SF0">
    <property type="entry name" value="NUCLEOSIDE TRIPHOSPHATE PYROPHOSPHOHYDROLASE"/>
    <property type="match status" value="1"/>
</dbReference>
<dbReference type="Pfam" id="PF03819">
    <property type="entry name" value="MazG"/>
    <property type="match status" value="1"/>
</dbReference>
<dbReference type="SUPFAM" id="SSF101386">
    <property type="entry name" value="all-alpha NTP pyrophosphatases"/>
    <property type="match status" value="1"/>
</dbReference>
<organism>
    <name type="scientific">Streptomyces cacaoi</name>
    <dbReference type="NCBI Taxonomy" id="1898"/>
    <lineage>
        <taxon>Bacteria</taxon>
        <taxon>Bacillati</taxon>
        <taxon>Actinomycetota</taxon>
        <taxon>Actinomycetes</taxon>
        <taxon>Kitasatosporales</taxon>
        <taxon>Streptomycetaceae</taxon>
        <taxon>Streptomyces</taxon>
    </lineage>
</organism>
<evidence type="ECO:0000305" key="1"/>
<comment type="similarity">
    <text evidence="1">To E.coli MazG and to plasmid pIP1100 erythromycin esterase.</text>
</comment>
<proteinExistence type="predicted"/>
<feature type="chain" id="PRO_0000066146" description="Uncharacterized 26.1 kDa protein in blaB 3'region">
    <location>
        <begin position="1"/>
        <end position="242"/>
    </location>
</feature>